<protein>
    <recommendedName>
        <fullName>Apelin receptor</fullName>
    </recommendedName>
    <alternativeName>
        <fullName>Angiotensin receptor-like 1</fullName>
    </alternativeName>
    <alternativeName>
        <fullName>G-protein coupled receptor APJ</fullName>
    </alternativeName>
</protein>
<keyword id="KW-1003">Cell membrane</keyword>
<keyword id="KW-0217">Developmental protein</keyword>
<keyword id="KW-1015">Disulfide bond</keyword>
<keyword id="KW-0297">G-protein coupled receptor</keyword>
<keyword id="KW-0306">Gastrulation</keyword>
<keyword id="KW-0325">Glycoprotein</keyword>
<keyword id="KW-0472">Membrane</keyword>
<keyword id="KW-0675">Receptor</keyword>
<keyword id="KW-1185">Reference proteome</keyword>
<keyword id="KW-0807">Transducer</keyword>
<keyword id="KW-0812">Transmembrane</keyword>
<keyword id="KW-1133">Transmembrane helix</keyword>
<reference key="1">
    <citation type="journal article" date="2001" name="AIDS Res. Hum. Retroviruses">
        <title>Identification and comparison of eleven rhesus macaque chemokine receptors.</title>
        <authorList>
            <person name="Margulies B.J."/>
            <person name="Hauer D.A."/>
            <person name="Clements J.E."/>
        </authorList>
    </citation>
    <scope>NUCLEOTIDE SEQUENCE [GENOMIC DNA]</scope>
    <source>
        <tissue>Spleen</tissue>
    </source>
</reference>
<accession>O97666</accession>
<sequence>MEEGGDFDNYYGADNQSECEYTDWKSSGALIPAIYMLVFLLGTTGNGLVLWTVFRSSREKRRSADIFIASLAVADLTFVVTLPLWATYTYRDYDWPFGTFSCKLSSYLIFVNMYASVFCLTGLSFDRYLAIVRPVANARLRLRVSGAVATAVLWVLAALLAMPVMVFRTTGDLENTTKVQCYMDYSMVATVSSDWAWEVGLGVSSTTVGFVVPFTIMLTCYFFIAQTIAGHFRKERIEGLRKRRRLLSIIVVLVVTFALCWMPYHLVKTLYMLGSLLHWPCDFDLFLMNVFPYCTCISYVNSCLNPFLYAFFDPRFRQACTSMLCCGQSRCAGTSHSSSGEKSASYSSGHSQGPGPNMGKGGEQMHEKSIPYSQETLVVD</sequence>
<evidence type="ECO:0000250" key="1">
    <source>
        <dbReference type="UniProtKB" id="P35414"/>
    </source>
</evidence>
<evidence type="ECO:0000250" key="2">
    <source>
        <dbReference type="UniProtKB" id="P79960"/>
    </source>
</evidence>
<evidence type="ECO:0000250" key="3">
    <source>
        <dbReference type="UniProtKB" id="Q7SZP9"/>
    </source>
</evidence>
<evidence type="ECO:0000250" key="4">
    <source>
        <dbReference type="UniProtKB" id="Q9JHG3"/>
    </source>
</evidence>
<evidence type="ECO:0000250" key="5">
    <source>
        <dbReference type="UniProtKB" id="Q9WV08"/>
    </source>
</evidence>
<evidence type="ECO:0000255" key="6"/>
<evidence type="ECO:0000255" key="7">
    <source>
        <dbReference type="PROSITE-ProRule" id="PRU00521"/>
    </source>
</evidence>
<evidence type="ECO:0000256" key="8">
    <source>
        <dbReference type="SAM" id="MobiDB-lite"/>
    </source>
</evidence>
<evidence type="ECO:0000305" key="9"/>
<gene>
    <name type="primary">APLNR</name>
    <name type="synonym">AGTRL1</name>
    <name type="synonym">APJ</name>
</gene>
<organism>
    <name type="scientific">Macaca mulatta</name>
    <name type="common">Rhesus macaque</name>
    <dbReference type="NCBI Taxonomy" id="9544"/>
    <lineage>
        <taxon>Eukaryota</taxon>
        <taxon>Metazoa</taxon>
        <taxon>Chordata</taxon>
        <taxon>Craniata</taxon>
        <taxon>Vertebrata</taxon>
        <taxon>Euteleostomi</taxon>
        <taxon>Mammalia</taxon>
        <taxon>Eutheria</taxon>
        <taxon>Euarchontoglires</taxon>
        <taxon>Primates</taxon>
        <taxon>Haplorrhini</taxon>
        <taxon>Catarrhini</taxon>
        <taxon>Cercopithecidae</taxon>
        <taxon>Cercopithecinae</taxon>
        <taxon>Macaca</taxon>
    </lineage>
</organism>
<dbReference type="EMBL" id="AF100206">
    <property type="protein sequence ID" value="AAC72404.1"/>
    <property type="molecule type" value="Genomic_DNA"/>
</dbReference>
<dbReference type="RefSeq" id="NP_001040591.1">
    <property type="nucleotide sequence ID" value="NM_001047126.1"/>
</dbReference>
<dbReference type="SMR" id="O97666"/>
<dbReference type="FunCoup" id="O97666">
    <property type="interactions" value="1037"/>
</dbReference>
<dbReference type="STRING" id="9544.ENSMMUP00000013928"/>
<dbReference type="GlyCosmos" id="O97666">
    <property type="glycosylation" value="2 sites, No reported glycans"/>
</dbReference>
<dbReference type="PaxDb" id="9544-ENSMMUP00000013928"/>
<dbReference type="GeneID" id="706823"/>
<dbReference type="KEGG" id="mcc:706823"/>
<dbReference type="CTD" id="187"/>
<dbReference type="eggNOG" id="KOG3656">
    <property type="taxonomic scope" value="Eukaryota"/>
</dbReference>
<dbReference type="HOGENOM" id="CLU_009579_8_1_1"/>
<dbReference type="InParanoid" id="O97666"/>
<dbReference type="OrthoDB" id="5974286at2759"/>
<dbReference type="TreeFam" id="TF330024"/>
<dbReference type="Proteomes" id="UP000006718">
    <property type="component" value="Unassembled WGS sequence"/>
</dbReference>
<dbReference type="GO" id="GO:0005886">
    <property type="term" value="C:plasma membrane"/>
    <property type="evidence" value="ECO:0000250"/>
    <property type="project" value="UniProtKB"/>
</dbReference>
<dbReference type="GO" id="GO:0060182">
    <property type="term" value="F:apelin receptor activity"/>
    <property type="evidence" value="ECO:0000250"/>
    <property type="project" value="UniProtKB"/>
</dbReference>
<dbReference type="GO" id="GO:0008528">
    <property type="term" value="F:G protein-coupled peptide receptor activity"/>
    <property type="evidence" value="ECO:0000250"/>
    <property type="project" value="UniProtKB"/>
</dbReference>
<dbReference type="GO" id="GO:0140897">
    <property type="term" value="F:mechanoreceptor activity"/>
    <property type="evidence" value="ECO:0000250"/>
    <property type="project" value="UniProtKB"/>
</dbReference>
<dbReference type="GO" id="GO:0060183">
    <property type="term" value="P:apelin receptor signaling pathway"/>
    <property type="evidence" value="ECO:0000250"/>
    <property type="project" value="UniProtKB"/>
</dbReference>
<dbReference type="GO" id="GO:0001568">
    <property type="term" value="P:blood vessel development"/>
    <property type="evidence" value="ECO:0000318"/>
    <property type="project" value="GO_Central"/>
</dbReference>
<dbReference type="GO" id="GO:0060976">
    <property type="term" value="P:coronary vasculature development"/>
    <property type="evidence" value="ECO:0000250"/>
    <property type="project" value="UniProtKB"/>
</dbReference>
<dbReference type="GO" id="GO:0007186">
    <property type="term" value="P:G protein-coupled receptor signaling pathway"/>
    <property type="evidence" value="ECO:0000250"/>
    <property type="project" value="UniProtKB"/>
</dbReference>
<dbReference type="GO" id="GO:0007369">
    <property type="term" value="P:gastrulation"/>
    <property type="evidence" value="ECO:0007669"/>
    <property type="project" value="UniProtKB-KW"/>
</dbReference>
<dbReference type="GO" id="GO:0007507">
    <property type="term" value="P:heart development"/>
    <property type="evidence" value="ECO:0000250"/>
    <property type="project" value="UniProtKB"/>
</dbReference>
<dbReference type="GO" id="GO:0043951">
    <property type="term" value="P:negative regulation of cAMP-mediated signaling"/>
    <property type="evidence" value="ECO:0000250"/>
    <property type="project" value="UniProtKB"/>
</dbReference>
<dbReference type="GO" id="GO:0045766">
    <property type="term" value="P:positive regulation of angiogenesis"/>
    <property type="evidence" value="ECO:0000250"/>
    <property type="project" value="UniProtKB"/>
</dbReference>
<dbReference type="GO" id="GO:1903589">
    <property type="term" value="P:positive regulation of blood vessel endothelial cell proliferation involved in sprouting angiogenesis"/>
    <property type="evidence" value="ECO:0000250"/>
    <property type="project" value="UniProtKB"/>
</dbReference>
<dbReference type="GO" id="GO:0051281">
    <property type="term" value="P:positive regulation of release of sequestered calcium ion into cytosol"/>
    <property type="evidence" value="ECO:0000250"/>
    <property type="project" value="UniProtKB"/>
</dbReference>
<dbReference type="CDD" id="cd15190">
    <property type="entry name" value="7tmA_Apelin_R"/>
    <property type="match status" value="1"/>
</dbReference>
<dbReference type="FunFam" id="1.20.1070.10:FF:000106">
    <property type="entry name" value="Apelin receptor a"/>
    <property type="match status" value="1"/>
</dbReference>
<dbReference type="Gene3D" id="1.20.1070.10">
    <property type="entry name" value="Rhodopsin 7-helix transmembrane proteins"/>
    <property type="match status" value="1"/>
</dbReference>
<dbReference type="InterPro" id="IPR003904">
    <property type="entry name" value="Apelin_rcpt"/>
</dbReference>
<dbReference type="InterPro" id="IPR050119">
    <property type="entry name" value="CCR1-9-like"/>
</dbReference>
<dbReference type="InterPro" id="IPR000276">
    <property type="entry name" value="GPCR_Rhodpsn"/>
</dbReference>
<dbReference type="InterPro" id="IPR017452">
    <property type="entry name" value="GPCR_Rhodpsn_7TM"/>
</dbReference>
<dbReference type="PANTHER" id="PTHR10489:SF953">
    <property type="entry name" value="APELIN RECEPTOR"/>
    <property type="match status" value="1"/>
</dbReference>
<dbReference type="PANTHER" id="PTHR10489">
    <property type="entry name" value="CELL ADHESION MOLECULE"/>
    <property type="match status" value="1"/>
</dbReference>
<dbReference type="Pfam" id="PF00001">
    <property type="entry name" value="7tm_1"/>
    <property type="match status" value="1"/>
</dbReference>
<dbReference type="PRINTS" id="PR01416">
    <property type="entry name" value="APJRECEPTOR"/>
</dbReference>
<dbReference type="PRINTS" id="PR00237">
    <property type="entry name" value="GPCRRHODOPSN"/>
</dbReference>
<dbReference type="SUPFAM" id="SSF81321">
    <property type="entry name" value="Family A G protein-coupled receptor-like"/>
    <property type="match status" value="1"/>
</dbReference>
<dbReference type="PROSITE" id="PS00237">
    <property type="entry name" value="G_PROTEIN_RECEP_F1_1"/>
    <property type="match status" value="1"/>
</dbReference>
<dbReference type="PROSITE" id="PS50262">
    <property type="entry name" value="G_PROTEIN_RECEP_F1_2"/>
    <property type="match status" value="1"/>
</dbReference>
<feature type="chain" id="PRO_0000069174" description="Apelin receptor">
    <location>
        <begin position="1"/>
        <end position="380"/>
    </location>
</feature>
<feature type="topological domain" description="Extracellular" evidence="9">
    <location>
        <begin position="1"/>
        <end position="30"/>
    </location>
</feature>
<feature type="transmembrane region" description="Helical; Name=1" evidence="1">
    <location>
        <begin position="31"/>
        <end position="54"/>
    </location>
</feature>
<feature type="topological domain" description="Cytoplasmic" evidence="9">
    <location>
        <begin position="55"/>
        <end position="64"/>
    </location>
</feature>
<feature type="transmembrane region" description="Helical; Name=2" evidence="1">
    <location>
        <begin position="65"/>
        <end position="86"/>
    </location>
</feature>
<feature type="topological domain" description="Extracellular" evidence="9">
    <location>
        <begin position="87"/>
        <end position="99"/>
    </location>
</feature>
<feature type="transmembrane region" description="Helical; Name=3" evidence="1">
    <location>
        <begin position="100"/>
        <end position="125"/>
    </location>
</feature>
<feature type="topological domain" description="Cytoplasmic" evidence="9">
    <location>
        <begin position="126"/>
        <end position="146"/>
    </location>
</feature>
<feature type="transmembrane region" description="Helical; Name=4" evidence="1">
    <location>
        <begin position="147"/>
        <end position="164"/>
    </location>
</feature>
<feature type="topological domain" description="Extracellular" evidence="9">
    <location>
        <begin position="165"/>
        <end position="198"/>
    </location>
</feature>
<feature type="transmembrane region" description="Helical; Name=5" evidence="1">
    <location>
        <begin position="199"/>
        <end position="223"/>
    </location>
</feature>
<feature type="topological domain" description="Cytoplasmic" evidence="9">
    <location>
        <begin position="224"/>
        <end position="246"/>
    </location>
</feature>
<feature type="transmembrane region" description="Helical; Name=6" evidence="1">
    <location>
        <begin position="247"/>
        <end position="270"/>
    </location>
</feature>
<feature type="topological domain" description="Extracellular" evidence="9">
    <location>
        <begin position="271"/>
        <end position="289"/>
    </location>
</feature>
<feature type="transmembrane region" description="Helical; Name=7" evidence="1">
    <location>
        <begin position="290"/>
        <end position="312"/>
    </location>
</feature>
<feature type="topological domain" description="Cytoplasmic" evidence="9">
    <location>
        <begin position="313"/>
        <end position="380"/>
    </location>
</feature>
<feature type="region of interest" description="Disordered" evidence="8">
    <location>
        <begin position="342"/>
        <end position="380"/>
    </location>
</feature>
<feature type="compositionally biased region" description="Low complexity" evidence="8">
    <location>
        <begin position="342"/>
        <end position="351"/>
    </location>
</feature>
<feature type="compositionally biased region" description="Polar residues" evidence="8">
    <location>
        <begin position="371"/>
        <end position="380"/>
    </location>
</feature>
<feature type="site" description="Required for APELA and APLN/apelin-13 interaction and signaling" evidence="1">
    <location>
        <position position="85"/>
    </location>
</feature>
<feature type="site" description="Required for APELA and APLN/apelin-13 interaction and signaling" evidence="1">
    <location>
        <position position="168"/>
    </location>
</feature>
<feature type="glycosylation site" description="N-linked (GlcNAc...) asparagine" evidence="6">
    <location>
        <position position="15"/>
    </location>
</feature>
<feature type="glycosylation site" description="N-linked (GlcNAc...) asparagine" evidence="6">
    <location>
        <position position="175"/>
    </location>
</feature>
<feature type="disulfide bond" evidence="1">
    <location>
        <begin position="19"/>
        <end position="281"/>
    </location>
</feature>
<feature type="disulfide bond" evidence="1">
    <location>
        <begin position="102"/>
        <end position="181"/>
    </location>
</feature>
<proteinExistence type="inferred from homology"/>
<comment type="function">
    <text evidence="1 3 5">G protein-coupled receptor for peptide hormones apelin (APLN) and apelin receptor early endogenous ligand (APELA/ELA), that plays a role in the regulation of normal cardiovascular function and fluid homeostasis. When acting as apelin receptor, activates both G(i) protein pathway that inhibits adenylate cyclase activity, and the beta-arrestin pathway that promotes internalization of the receptor. APLNR/APJ also functions as mechanoreceptor that is activated by pathological stimuli in a G-protein-independent fashion to induce beta-arrestin signaling, hence eliciting cardiac hypertrophy. However, the presence of apelin ligand blunts cardiac hypertrophic induction from APLNR/APJ on response to pathological stimuli (By similarity). Plays a key role in early development such as gastrulation, blood vessels formation and heart morphogenesis by acting as a APELA receptor (By similarity). May promote angioblast migration toward the embryonic midline, i.e. the position of the future vessel formation, during vasculogenesis (By similarity). Promotes sinus venosus (SV)-derived endothelial cells migration into the developing heart to promote coronary blood vessel development (By similarity). Also plays a role in various processes in adults such as regulation of blood vessel formation, blood pressure, heart contractility and heart failure (By similarity).</text>
</comment>
<comment type="function">
    <text>(Microbial infection) Alternative coreceptor with CD4 for HIV-1 infection; may be involved in the development of AIDS dementia.</text>
</comment>
<comment type="subunit">
    <text evidence="1">Homodimer; dimerization inhibits APLNR-mediated G protein and beta-arrestin signaling pathways compared to monomeric APLNR.</text>
</comment>
<comment type="subcellular location">
    <subcellularLocation>
        <location evidence="1">Cell membrane</location>
        <topology evidence="2">Multi-pass membrane protein</topology>
    </subcellularLocation>
    <text evidence="1 4">After exposure to apelin (APLN) or apelin receptor early endogenous ligand (APELA), internalized from the cell surface into an endosomal recycling compartment, from where it is recycled to the cell membrane.</text>
</comment>
<comment type="domain">
    <text evidence="1">The hydrogen bond between Asn-46 and Asp-75 is crucial for beta-arrestin signaling induced by APLN/apelin-13.</text>
</comment>
<comment type="similarity">
    <text evidence="7">Belongs to the G-protein coupled receptor 1 family.</text>
</comment>
<name>APJ_MACMU</name>